<name>ACEA_NEUCR</name>
<feature type="chain" id="PRO_0000068794" description="Isocitrate lyase">
    <location>
        <begin position="1"/>
        <end position="548"/>
    </location>
</feature>
<feature type="active site" description="Proton acceptor" evidence="2">
    <location>
        <position position="215"/>
    </location>
</feature>
<feature type="binding site" evidence="2">
    <location>
        <begin position="106"/>
        <end position="108"/>
    </location>
    <ligand>
        <name>substrate</name>
    </ligand>
</feature>
<feature type="binding site" evidence="2">
    <location>
        <position position="177"/>
    </location>
    <ligand>
        <name>Mg(2+)</name>
        <dbReference type="ChEBI" id="CHEBI:18420"/>
    </ligand>
</feature>
<feature type="binding site" evidence="2">
    <location>
        <begin position="216"/>
        <end position="217"/>
    </location>
    <ligand>
        <name>substrate</name>
    </ligand>
</feature>
<feature type="binding site" evidence="2">
    <location>
        <position position="252"/>
    </location>
    <ligand>
        <name>substrate</name>
    </ligand>
</feature>
<feature type="binding site" evidence="2">
    <location>
        <begin position="434"/>
        <end position="438"/>
    </location>
    <ligand>
        <name>substrate</name>
    </ligand>
</feature>
<feature type="binding site" evidence="2">
    <location>
        <position position="468"/>
    </location>
    <ligand>
        <name>substrate</name>
    </ligand>
</feature>
<feature type="sequence conflict" description="In Ref. 1; CAA44573." evidence="6" ref="1">
    <original>V</original>
    <variation>C</variation>
    <location>
        <position position="132"/>
    </location>
</feature>
<feature type="sequence conflict" description="In Ref. 1; CAA44573." evidence="6" ref="1">
    <original>D</original>
    <variation>H</variation>
    <location>
        <position position="286"/>
    </location>
</feature>
<feature type="sequence conflict" description="In Ref. 1; CAA44573." evidence="6" ref="1">
    <original>VHA</original>
    <variation>PR</variation>
    <location>
        <begin position="422"/>
        <end position="424"/>
    </location>
</feature>
<dbReference type="EC" id="4.1.3.1" evidence="1"/>
<dbReference type="EC" id="4.1.3.30" evidence="1"/>
<dbReference type="EMBL" id="X62697">
    <property type="protein sequence ID" value="CAA44573.1"/>
    <property type="molecule type" value="Genomic_DNA"/>
</dbReference>
<dbReference type="EMBL" id="AL451022">
    <property type="protein sequence ID" value="CAC18302.1"/>
    <property type="molecule type" value="Genomic_DNA"/>
</dbReference>
<dbReference type="EMBL" id="CM002240">
    <property type="protein sequence ID" value="EAA31618.1"/>
    <property type="molecule type" value="Genomic_DNA"/>
</dbReference>
<dbReference type="PIR" id="S26858">
    <property type="entry name" value="S26858"/>
</dbReference>
<dbReference type="RefSeq" id="XP_960854.1">
    <property type="nucleotide sequence ID" value="XM_955761.3"/>
</dbReference>
<dbReference type="SMR" id="P28299"/>
<dbReference type="FunCoup" id="P28299">
    <property type="interactions" value="152"/>
</dbReference>
<dbReference type="STRING" id="367110.P28299"/>
<dbReference type="PaxDb" id="5141-EFNCRP00000003928"/>
<dbReference type="EnsemblFungi" id="EAA31618">
    <property type="protein sequence ID" value="EAA31618"/>
    <property type="gene ID" value="NCU04230"/>
</dbReference>
<dbReference type="GeneID" id="3877001"/>
<dbReference type="KEGG" id="ncr:NCU04230"/>
<dbReference type="VEuPathDB" id="FungiDB:NCU04230"/>
<dbReference type="HOGENOM" id="CLU_019214_2_2_1"/>
<dbReference type="InParanoid" id="P28299"/>
<dbReference type="OMA" id="YVSGWQV"/>
<dbReference type="OrthoDB" id="4078635at2759"/>
<dbReference type="UniPathway" id="UPA00703">
    <property type="reaction ID" value="UER00719"/>
</dbReference>
<dbReference type="Proteomes" id="UP000001805">
    <property type="component" value="Chromosome 2, Linkage Group V"/>
</dbReference>
<dbReference type="GO" id="GO:0009514">
    <property type="term" value="C:glyoxysome"/>
    <property type="evidence" value="ECO:0007669"/>
    <property type="project" value="UniProtKB-SubCell"/>
</dbReference>
<dbReference type="GO" id="GO:0004451">
    <property type="term" value="F:isocitrate lyase activity"/>
    <property type="evidence" value="ECO:0000318"/>
    <property type="project" value="GO_Central"/>
</dbReference>
<dbReference type="GO" id="GO:0046872">
    <property type="term" value="F:metal ion binding"/>
    <property type="evidence" value="ECO:0007669"/>
    <property type="project" value="UniProtKB-KW"/>
</dbReference>
<dbReference type="GO" id="GO:0046421">
    <property type="term" value="F:methylisocitrate lyase activity"/>
    <property type="evidence" value="ECO:0007669"/>
    <property type="project" value="UniProtKB-EC"/>
</dbReference>
<dbReference type="GO" id="GO:0006097">
    <property type="term" value="P:glyoxylate cycle"/>
    <property type="evidence" value="ECO:0007669"/>
    <property type="project" value="UniProtKB-UniPathway"/>
</dbReference>
<dbReference type="GO" id="GO:0006099">
    <property type="term" value="P:tricarboxylic acid cycle"/>
    <property type="evidence" value="ECO:0007669"/>
    <property type="project" value="UniProtKB-KW"/>
</dbReference>
<dbReference type="FunFam" id="1.10.10.850:FF:000001">
    <property type="entry name" value="Isocitrate lyase"/>
    <property type="match status" value="1"/>
</dbReference>
<dbReference type="Gene3D" id="1.10.10.850">
    <property type="match status" value="1"/>
</dbReference>
<dbReference type="Gene3D" id="3.20.20.60">
    <property type="entry name" value="Phosphoenolpyruvate-binding domains"/>
    <property type="match status" value="1"/>
</dbReference>
<dbReference type="InterPro" id="IPR006254">
    <property type="entry name" value="Isocitrate_lyase"/>
</dbReference>
<dbReference type="InterPro" id="IPR018523">
    <property type="entry name" value="Isocitrate_lyase_ph_CS"/>
</dbReference>
<dbReference type="InterPro" id="IPR015813">
    <property type="entry name" value="Pyrv/PenolPyrv_kinase-like_dom"/>
</dbReference>
<dbReference type="InterPro" id="IPR040442">
    <property type="entry name" value="Pyrv_kinase-like_dom_sf"/>
</dbReference>
<dbReference type="NCBIfam" id="TIGR01346">
    <property type="entry name" value="isocit_lyase"/>
    <property type="match status" value="1"/>
</dbReference>
<dbReference type="PANTHER" id="PTHR21631:SF3">
    <property type="entry name" value="BIFUNCTIONAL GLYOXYLATE CYCLE PROTEIN"/>
    <property type="match status" value="1"/>
</dbReference>
<dbReference type="PANTHER" id="PTHR21631">
    <property type="entry name" value="ISOCITRATE LYASE/MALATE SYNTHASE"/>
    <property type="match status" value="1"/>
</dbReference>
<dbReference type="Pfam" id="PF00463">
    <property type="entry name" value="ICL"/>
    <property type="match status" value="1"/>
</dbReference>
<dbReference type="PIRSF" id="PIRSF001362">
    <property type="entry name" value="Isocit_lyase"/>
    <property type="match status" value="1"/>
</dbReference>
<dbReference type="SUPFAM" id="SSF51621">
    <property type="entry name" value="Phosphoenolpyruvate/pyruvate domain"/>
    <property type="match status" value="1"/>
</dbReference>
<dbReference type="PROSITE" id="PS00161">
    <property type="entry name" value="ISOCITRATE_LYASE"/>
    <property type="match status" value="1"/>
</dbReference>
<protein>
    <recommendedName>
        <fullName evidence="5">Isocitrate lyase</fullName>
        <shortName evidence="6">ICL</shortName>
        <shortName evidence="6">Isocitrase</shortName>
        <shortName evidence="6">Isocitratase</shortName>
        <ecNumber evidence="1">4.1.3.1</ecNumber>
    </recommendedName>
    <alternativeName>
        <fullName evidence="1">Methylisocitrate lyase</fullName>
        <shortName evidence="6">MICA</shortName>
        <ecNumber evidence="1">4.1.3.30</ecNumber>
    </alternativeName>
    <alternativeName>
        <fullName evidence="6">Threo-D(S)-isocitrate glyoxylate-lyase</fullName>
    </alternativeName>
</protein>
<sequence length="548" mass="61214">MAANNMVNPAVDPALEDELFAKEVEEVKKWWSDSRWRQTKRPFTAEQIVSKRGNLKIEYASNAQAKKLWKILEDRFAKRDASYTYGCLEPTMVTQMAKYLDTVYVSGWQSSSTASSSDEPGPDLADYPYTTVPNKVGHLFMAQLFHDRKQRQERLSVPKDQREKLANIDYLRPIVADADTGHGGLTAVMKLTKLFIEKGAAGIHIEDQAPGTKKCGHMAGKVLVPIQEHINRLVAIRAQADIMGSDLLCIARTDAEAATLITTTIDPRDHAFILGCTNPDLEPLADLMMKAEAEGKTGAQLQAIEDDWLAKADLKRFDEAVLDVIAKGKFSNAKDLAAKYQAAVKGKQISNREARAIARQLLGQEIFFDWESPRTREGYYRLKGGCDCSINRAISYAPYCDAIWMESKLPDYAQAEEFAKGVHAVWPEQKLAYNLSPSFNWKTAMGRDDQETYIRRLAKLGYCWQFITLAGLHTTALISDQFAKAYSKIGMRAYGELVQEPEIDNGVDVVKHQKWSGATYVDELQKMVTGGVSSTAAMGKGVTEDQFH</sequence>
<evidence type="ECO:0000250" key="1">
    <source>
        <dbReference type="UniProtKB" id="P28240"/>
    </source>
</evidence>
<evidence type="ECO:0000250" key="2">
    <source>
        <dbReference type="UniProtKB" id="P9WKK7"/>
    </source>
</evidence>
<evidence type="ECO:0000269" key="3">
    <source>
    </source>
</evidence>
<evidence type="ECO:0000269" key="4">
    <source>
    </source>
</evidence>
<evidence type="ECO:0000303" key="5">
    <source>
    </source>
</evidence>
<evidence type="ECO:0000305" key="6"/>
<keyword id="KW-0329">Glyoxylate bypass</keyword>
<keyword id="KW-0330">Glyoxysome</keyword>
<keyword id="KW-0456">Lyase</keyword>
<keyword id="KW-0460">Magnesium</keyword>
<keyword id="KW-0479">Metal-binding</keyword>
<keyword id="KW-0576">Peroxisome</keyword>
<keyword id="KW-1185">Reference proteome</keyword>
<keyword id="KW-0816">Tricarboxylic acid cycle</keyword>
<organism>
    <name type="scientific">Neurospora crassa (strain ATCC 24698 / 74-OR23-1A / CBS 708.71 / DSM 1257 / FGSC 987)</name>
    <dbReference type="NCBI Taxonomy" id="367110"/>
    <lineage>
        <taxon>Eukaryota</taxon>
        <taxon>Fungi</taxon>
        <taxon>Dikarya</taxon>
        <taxon>Ascomycota</taxon>
        <taxon>Pezizomycotina</taxon>
        <taxon>Sordariomycetes</taxon>
        <taxon>Sordariomycetidae</taxon>
        <taxon>Sordariales</taxon>
        <taxon>Sordariaceae</taxon>
        <taxon>Neurospora</taxon>
    </lineage>
</organism>
<proteinExistence type="evidence at transcript level"/>
<gene>
    <name evidence="5" type="primary">acu-3</name>
    <name type="ORF">2E4.10</name>
    <name type="ORF">NCU04230</name>
</gene>
<reference key="1">
    <citation type="journal article" date="1992" name="Curr. Genet.">
        <title>Characterization of the glyoxysomal isocitrate lyase genes of Aspergillus nidulans (acuD) and Neurospora crassa (acu-3).</title>
        <authorList>
            <person name="Gainey L.D.S."/>
            <person name="Connerton I.F."/>
            <person name="Lewis E.H."/>
            <person name="Turner G."/>
            <person name="Ballance D.J."/>
        </authorList>
    </citation>
    <scope>NUCLEOTIDE SEQUENCE [GENOMIC DNA]</scope>
    <scope>INDUCTION</scope>
    <source>
        <strain>74A</strain>
    </source>
</reference>
<reference key="2">
    <citation type="journal article" date="2003" name="Nucleic Acids Res.">
        <title>What's in the genome of a filamentous fungus? Analysis of the Neurospora genome sequence.</title>
        <authorList>
            <person name="Mannhaupt G."/>
            <person name="Montrone C."/>
            <person name="Haase D."/>
            <person name="Mewes H.-W."/>
            <person name="Aign V."/>
            <person name="Hoheisel J.D."/>
            <person name="Fartmann B."/>
            <person name="Nyakatura G."/>
            <person name="Kempken F."/>
            <person name="Maier J."/>
            <person name="Schulte U."/>
        </authorList>
    </citation>
    <scope>NUCLEOTIDE SEQUENCE [LARGE SCALE GENOMIC DNA]</scope>
    <source>
        <strain>ATCC 24698 / 74-OR23-1A / CBS 708.71 / DSM 1257 / FGSC 987</strain>
    </source>
</reference>
<reference key="3">
    <citation type="journal article" date="2003" name="Nature">
        <title>The genome sequence of the filamentous fungus Neurospora crassa.</title>
        <authorList>
            <person name="Galagan J.E."/>
            <person name="Calvo S.E."/>
            <person name="Borkovich K.A."/>
            <person name="Selker E.U."/>
            <person name="Read N.D."/>
            <person name="Jaffe D.B."/>
            <person name="FitzHugh W."/>
            <person name="Ma L.-J."/>
            <person name="Smirnov S."/>
            <person name="Purcell S."/>
            <person name="Rehman B."/>
            <person name="Elkins T."/>
            <person name="Engels R."/>
            <person name="Wang S."/>
            <person name="Nielsen C.B."/>
            <person name="Butler J."/>
            <person name="Endrizzi M."/>
            <person name="Qui D."/>
            <person name="Ianakiev P."/>
            <person name="Bell-Pedersen D."/>
            <person name="Nelson M.A."/>
            <person name="Werner-Washburne M."/>
            <person name="Selitrennikoff C.P."/>
            <person name="Kinsey J.A."/>
            <person name="Braun E.L."/>
            <person name="Zelter A."/>
            <person name="Schulte U."/>
            <person name="Kothe G.O."/>
            <person name="Jedd G."/>
            <person name="Mewes H.-W."/>
            <person name="Staben C."/>
            <person name="Marcotte E."/>
            <person name="Greenberg D."/>
            <person name="Roy A."/>
            <person name="Foley K."/>
            <person name="Naylor J."/>
            <person name="Stange-Thomann N."/>
            <person name="Barrett R."/>
            <person name="Gnerre S."/>
            <person name="Kamal M."/>
            <person name="Kamvysselis M."/>
            <person name="Mauceli E.W."/>
            <person name="Bielke C."/>
            <person name="Rudd S."/>
            <person name="Frishman D."/>
            <person name="Krystofova S."/>
            <person name="Rasmussen C."/>
            <person name="Metzenberg R.L."/>
            <person name="Perkins D.D."/>
            <person name="Kroken S."/>
            <person name="Cogoni C."/>
            <person name="Macino G."/>
            <person name="Catcheside D.E.A."/>
            <person name="Li W."/>
            <person name="Pratt R.J."/>
            <person name="Osmani S.A."/>
            <person name="DeSouza C.P.C."/>
            <person name="Glass N.L."/>
            <person name="Orbach M.J."/>
            <person name="Berglund J.A."/>
            <person name="Voelker R."/>
            <person name="Yarden O."/>
            <person name="Plamann M."/>
            <person name="Seiler S."/>
            <person name="Dunlap J.C."/>
            <person name="Radford A."/>
            <person name="Aramayo R."/>
            <person name="Natvig D.O."/>
            <person name="Alex L.A."/>
            <person name="Mannhaupt G."/>
            <person name="Ebbole D.J."/>
            <person name="Freitag M."/>
            <person name="Paulsen I."/>
            <person name="Sachs M.S."/>
            <person name="Lander E.S."/>
            <person name="Nusbaum C."/>
            <person name="Birren B.W."/>
        </authorList>
    </citation>
    <scope>NUCLEOTIDE SEQUENCE [LARGE SCALE GENOMIC DNA]</scope>
    <source>
        <strain>ATCC 24698 / 74-OR23-1A / CBS 708.71 / DSM 1257 / FGSC 987</strain>
    </source>
</reference>
<reference key="4">
    <citation type="journal article" date="1969" name="Biochem. Biophys. Res. Commun.">
        <title>Particulate enzymes of the glyoxylate cycle in Neurospora crassa.</title>
        <authorList>
            <person name="Kobr M.J."/>
            <person name="Vanderhaeghe F."/>
            <person name="Combepine G."/>
        </authorList>
    </citation>
    <scope>SUBCELLULAR LOCATION</scope>
</reference>
<accession>P28299</accession>
<accession>Q7RVC2</accession>
<accession>Q9HEI3</accession>
<comment type="function">
    <text evidence="1">Catalyzes the formation of succinate and glyoxylate from isocitrate, a key step of the glyoxylate cycle, which operates as an anaplerotic route for replenishing the tricarboxylic acid cycle. Required for growth on ethanol or acetate, but dispensable when fermentable carbon sources are available. Also acts on 2-methylisocitrate.</text>
</comment>
<comment type="catalytic activity">
    <reaction evidence="1">
        <text>D-threo-isocitrate = glyoxylate + succinate</text>
        <dbReference type="Rhea" id="RHEA:13245"/>
        <dbReference type="ChEBI" id="CHEBI:15562"/>
        <dbReference type="ChEBI" id="CHEBI:30031"/>
        <dbReference type="ChEBI" id="CHEBI:36655"/>
        <dbReference type="EC" id="4.1.3.1"/>
    </reaction>
</comment>
<comment type="catalytic activity">
    <reaction evidence="1">
        <text>(2S,3R)-3-hydroxybutane-1,2,3-tricarboxylate = pyruvate + succinate</text>
        <dbReference type="Rhea" id="RHEA:16809"/>
        <dbReference type="ChEBI" id="CHEBI:15361"/>
        <dbReference type="ChEBI" id="CHEBI:30031"/>
        <dbReference type="ChEBI" id="CHEBI:57429"/>
        <dbReference type="EC" id="4.1.3.30"/>
    </reaction>
</comment>
<comment type="cofactor">
    <cofactor evidence="2">
        <name>Mg(2+)</name>
        <dbReference type="ChEBI" id="CHEBI:18420"/>
    </cofactor>
</comment>
<comment type="pathway">
    <text>Carbohydrate metabolism; glyoxylate cycle; (S)-malate from isocitrate: step 1/2.</text>
</comment>
<comment type="subunit">
    <text evidence="1">Homotetramer.</text>
</comment>
<comment type="subcellular location">
    <subcellularLocation>
        <location evidence="4">Glyoxysome</location>
    </subcellularLocation>
</comment>
<comment type="induction">
    <text evidence="3">By acetate.</text>
</comment>
<comment type="similarity">
    <text evidence="6">Belongs to the isocitrate lyase/PEP mutase superfamily. Isocitrate lyase family.</text>
</comment>